<proteinExistence type="evidence at transcript level"/>
<evidence type="ECO:0000250" key="1"/>
<evidence type="ECO:0000255" key="2"/>
<evidence type="ECO:0000269" key="3">
    <source>
    </source>
</evidence>
<evidence type="ECO:0000269" key="4">
    <source>
    </source>
</evidence>
<evidence type="ECO:0000269" key="5">
    <source>
    </source>
</evidence>
<evidence type="ECO:0000305" key="6"/>
<dbReference type="EMBL" id="AE014134">
    <property type="protein sequence ID" value="AAF51040.3"/>
    <property type="molecule type" value="Genomic_DNA"/>
</dbReference>
<dbReference type="RefSeq" id="NP_523470.3">
    <property type="nucleotide sequence ID" value="NM_078746.5"/>
</dbReference>
<dbReference type="SMR" id="P81913"/>
<dbReference type="FunCoup" id="P81913">
    <property type="interactions" value="25"/>
</dbReference>
<dbReference type="STRING" id="7227.FBpp0288403"/>
<dbReference type="PaxDb" id="7227-FBpp0288403"/>
<dbReference type="EnsemblMetazoa" id="FBtr0289965">
    <property type="protein sequence ID" value="FBpp0288403"/>
    <property type="gene ID" value="FBgn0026394"/>
</dbReference>
<dbReference type="GeneID" id="33623"/>
<dbReference type="KEGG" id="dme:Dmel_CG11767"/>
<dbReference type="AGR" id="FB:FBgn0026394"/>
<dbReference type="CTD" id="33623"/>
<dbReference type="FlyBase" id="FBgn0026394">
    <property type="gene designation" value="Or24a"/>
</dbReference>
<dbReference type="VEuPathDB" id="VectorBase:FBgn0026394"/>
<dbReference type="eggNOG" id="ENOG502TCB2">
    <property type="taxonomic scope" value="Eukaryota"/>
</dbReference>
<dbReference type="GeneTree" id="ENSGT00940000166470"/>
<dbReference type="HOGENOM" id="CLU_033399_7_0_1"/>
<dbReference type="InParanoid" id="P81913"/>
<dbReference type="OMA" id="CCGFCTS"/>
<dbReference type="OrthoDB" id="6765072at2759"/>
<dbReference type="PhylomeDB" id="P81913"/>
<dbReference type="BioGRID-ORCS" id="33623">
    <property type="hits" value="0 hits in 1 CRISPR screen"/>
</dbReference>
<dbReference type="GenomeRNAi" id="33623"/>
<dbReference type="PRO" id="PR:P81913"/>
<dbReference type="Proteomes" id="UP000000803">
    <property type="component" value="Chromosome 2L"/>
</dbReference>
<dbReference type="ExpressionAtlas" id="P81913">
    <property type="expression patterns" value="baseline and differential"/>
</dbReference>
<dbReference type="GO" id="GO:0034703">
    <property type="term" value="C:cation channel complex"/>
    <property type="evidence" value="ECO:0000250"/>
    <property type="project" value="FlyBase"/>
</dbReference>
<dbReference type="GO" id="GO:0032590">
    <property type="term" value="C:dendrite membrane"/>
    <property type="evidence" value="ECO:0000250"/>
    <property type="project" value="FlyBase"/>
</dbReference>
<dbReference type="GO" id="GO:0016020">
    <property type="term" value="C:membrane"/>
    <property type="evidence" value="ECO:0000303"/>
    <property type="project" value="UniProtKB"/>
</dbReference>
<dbReference type="GO" id="GO:0005886">
    <property type="term" value="C:plasma membrane"/>
    <property type="evidence" value="ECO:0000250"/>
    <property type="project" value="FlyBase"/>
</dbReference>
<dbReference type="GO" id="GO:0170020">
    <property type="term" value="F:ionotropic olfactory receptor activity"/>
    <property type="evidence" value="ECO:0000250"/>
    <property type="project" value="FlyBase"/>
</dbReference>
<dbReference type="GO" id="GO:0005549">
    <property type="term" value="F:odorant binding"/>
    <property type="evidence" value="ECO:0000250"/>
    <property type="project" value="FlyBase"/>
</dbReference>
<dbReference type="GO" id="GO:0004984">
    <property type="term" value="F:olfactory receptor activity"/>
    <property type="evidence" value="ECO:0000318"/>
    <property type="project" value="GO_Central"/>
</dbReference>
<dbReference type="GO" id="GO:0050911">
    <property type="term" value="P:detection of chemical stimulus involved in sensory perception of smell"/>
    <property type="evidence" value="ECO:0000250"/>
    <property type="project" value="FlyBase"/>
</dbReference>
<dbReference type="GO" id="GO:0007608">
    <property type="term" value="P:sensory perception of smell"/>
    <property type="evidence" value="ECO:0000303"/>
    <property type="project" value="UniProtKB"/>
</dbReference>
<dbReference type="GO" id="GO:0007165">
    <property type="term" value="P:signal transduction"/>
    <property type="evidence" value="ECO:0007669"/>
    <property type="project" value="UniProtKB-KW"/>
</dbReference>
<dbReference type="InterPro" id="IPR004117">
    <property type="entry name" value="7tm6_olfct_rcpt"/>
</dbReference>
<dbReference type="PANTHER" id="PTHR21137">
    <property type="entry name" value="ODORANT RECEPTOR"/>
    <property type="match status" value="1"/>
</dbReference>
<dbReference type="PANTHER" id="PTHR21137:SF26">
    <property type="entry name" value="ODORANT RECEPTOR 10A-RELATED"/>
    <property type="match status" value="1"/>
</dbReference>
<dbReference type="Pfam" id="PF02949">
    <property type="entry name" value="7tm_6"/>
    <property type="match status" value="1"/>
</dbReference>
<comment type="function">
    <text evidence="4 5">Odorant receptor which mediates acceptance or avoidance behavior, depending on its substrates. The odorant receptor repertoire encodes a large collection of odor stimuli that vary widely in identity, intensity, and duration. May form a complex with Orco to form odorant-sensing units, providing sensitive and prolonged odorant signaling and calcium permeability. Involved in the behavioral responses to pentanol, hexanol, octanol, nonanol, propyl acetate, butyl acetate, isoamyl acetate, methyl caproate, anisole, heptanal, 2-heptanone, r-carvone, and nonanoic acid. Also responds to pyrazines.</text>
</comment>
<comment type="subunit">
    <text evidence="1">Interacts with Orco. Complexes exist early in the endomembrane system in olfactory sensory neurons (OSNs), coupling these complexes to the conserved ciliary trafficking pathway (By similarity).</text>
</comment>
<comment type="subcellular location">
    <subcellularLocation>
        <location evidence="1">Cell membrane</location>
        <topology evidence="1">Multi-pass membrane protein</topology>
    </subcellularLocation>
</comment>
<comment type="tissue specificity">
    <text evidence="3">Not expressed in either the antenna or maxillary palp.</text>
</comment>
<comment type="miscellaneous">
    <text>The atypical heteromeric and topological design of the odorant receptors appears to be an insect-specific solution for odor recognition, making the OR/Orco complex an attractive target for the development of highly selective insect repellents to disrupt olfactory-mediated host-seeking behaviors of insect disease vectors. Odor-evoked OR currents are independent of known G-protein-coupled second messenger pathways.</text>
</comment>
<comment type="similarity">
    <text evidence="6">Belongs to the insect chemoreceptor superfamily. Heteromeric odorant receptor channel (TC 1.A.69) family. Or1a subfamily.</text>
</comment>
<reference key="1">
    <citation type="journal article" date="2000" name="Science">
        <title>The genome sequence of Drosophila melanogaster.</title>
        <authorList>
            <person name="Adams M.D."/>
            <person name="Celniker S.E."/>
            <person name="Holt R.A."/>
            <person name="Evans C.A."/>
            <person name="Gocayne J.D."/>
            <person name="Amanatides P.G."/>
            <person name="Scherer S.E."/>
            <person name="Li P.W."/>
            <person name="Hoskins R.A."/>
            <person name="Galle R.F."/>
            <person name="George R.A."/>
            <person name="Lewis S.E."/>
            <person name="Richards S."/>
            <person name="Ashburner M."/>
            <person name="Henderson S.N."/>
            <person name="Sutton G.G."/>
            <person name="Wortman J.R."/>
            <person name="Yandell M.D."/>
            <person name="Zhang Q."/>
            <person name="Chen L.X."/>
            <person name="Brandon R.C."/>
            <person name="Rogers Y.-H.C."/>
            <person name="Blazej R.G."/>
            <person name="Champe M."/>
            <person name="Pfeiffer B.D."/>
            <person name="Wan K.H."/>
            <person name="Doyle C."/>
            <person name="Baxter E.G."/>
            <person name="Helt G."/>
            <person name="Nelson C.R."/>
            <person name="Miklos G.L.G."/>
            <person name="Abril J.F."/>
            <person name="Agbayani A."/>
            <person name="An H.-J."/>
            <person name="Andrews-Pfannkoch C."/>
            <person name="Baldwin D."/>
            <person name="Ballew R.M."/>
            <person name="Basu A."/>
            <person name="Baxendale J."/>
            <person name="Bayraktaroglu L."/>
            <person name="Beasley E.M."/>
            <person name="Beeson K.Y."/>
            <person name="Benos P.V."/>
            <person name="Berman B.P."/>
            <person name="Bhandari D."/>
            <person name="Bolshakov S."/>
            <person name="Borkova D."/>
            <person name="Botchan M.R."/>
            <person name="Bouck J."/>
            <person name="Brokstein P."/>
            <person name="Brottier P."/>
            <person name="Burtis K.C."/>
            <person name="Busam D.A."/>
            <person name="Butler H."/>
            <person name="Cadieu E."/>
            <person name="Center A."/>
            <person name="Chandra I."/>
            <person name="Cherry J.M."/>
            <person name="Cawley S."/>
            <person name="Dahlke C."/>
            <person name="Davenport L.B."/>
            <person name="Davies P."/>
            <person name="de Pablos B."/>
            <person name="Delcher A."/>
            <person name="Deng Z."/>
            <person name="Mays A.D."/>
            <person name="Dew I."/>
            <person name="Dietz S.M."/>
            <person name="Dodson K."/>
            <person name="Doup L.E."/>
            <person name="Downes M."/>
            <person name="Dugan-Rocha S."/>
            <person name="Dunkov B.C."/>
            <person name="Dunn P."/>
            <person name="Durbin K.J."/>
            <person name="Evangelista C.C."/>
            <person name="Ferraz C."/>
            <person name="Ferriera S."/>
            <person name="Fleischmann W."/>
            <person name="Fosler C."/>
            <person name="Gabrielian A.E."/>
            <person name="Garg N.S."/>
            <person name="Gelbart W.M."/>
            <person name="Glasser K."/>
            <person name="Glodek A."/>
            <person name="Gong F."/>
            <person name="Gorrell J.H."/>
            <person name="Gu Z."/>
            <person name="Guan P."/>
            <person name="Harris M."/>
            <person name="Harris N.L."/>
            <person name="Harvey D.A."/>
            <person name="Heiman T.J."/>
            <person name="Hernandez J.R."/>
            <person name="Houck J."/>
            <person name="Hostin D."/>
            <person name="Houston K.A."/>
            <person name="Howland T.J."/>
            <person name="Wei M.-H."/>
            <person name="Ibegwam C."/>
            <person name="Jalali M."/>
            <person name="Kalush F."/>
            <person name="Karpen G.H."/>
            <person name="Ke Z."/>
            <person name="Kennison J.A."/>
            <person name="Ketchum K.A."/>
            <person name="Kimmel B.E."/>
            <person name="Kodira C.D."/>
            <person name="Kraft C.L."/>
            <person name="Kravitz S."/>
            <person name="Kulp D."/>
            <person name="Lai Z."/>
            <person name="Lasko P."/>
            <person name="Lei Y."/>
            <person name="Levitsky A.A."/>
            <person name="Li J.H."/>
            <person name="Li Z."/>
            <person name="Liang Y."/>
            <person name="Lin X."/>
            <person name="Liu X."/>
            <person name="Mattei B."/>
            <person name="McIntosh T.C."/>
            <person name="McLeod M.P."/>
            <person name="McPherson D."/>
            <person name="Merkulov G."/>
            <person name="Milshina N.V."/>
            <person name="Mobarry C."/>
            <person name="Morris J."/>
            <person name="Moshrefi A."/>
            <person name="Mount S.M."/>
            <person name="Moy M."/>
            <person name="Murphy B."/>
            <person name="Murphy L."/>
            <person name="Muzny D.M."/>
            <person name="Nelson D.L."/>
            <person name="Nelson D.R."/>
            <person name="Nelson K.A."/>
            <person name="Nixon K."/>
            <person name="Nusskern D.R."/>
            <person name="Pacleb J.M."/>
            <person name="Palazzolo M."/>
            <person name="Pittman G.S."/>
            <person name="Pan S."/>
            <person name="Pollard J."/>
            <person name="Puri V."/>
            <person name="Reese M.G."/>
            <person name="Reinert K."/>
            <person name="Remington K."/>
            <person name="Saunders R.D.C."/>
            <person name="Scheeler F."/>
            <person name="Shen H."/>
            <person name="Shue B.C."/>
            <person name="Siden-Kiamos I."/>
            <person name="Simpson M."/>
            <person name="Skupski M.P."/>
            <person name="Smith T.J."/>
            <person name="Spier E."/>
            <person name="Spradling A.C."/>
            <person name="Stapleton M."/>
            <person name="Strong R."/>
            <person name="Sun E."/>
            <person name="Svirskas R."/>
            <person name="Tector C."/>
            <person name="Turner R."/>
            <person name="Venter E."/>
            <person name="Wang A.H."/>
            <person name="Wang X."/>
            <person name="Wang Z.-Y."/>
            <person name="Wassarman D.A."/>
            <person name="Weinstock G.M."/>
            <person name="Weissenbach J."/>
            <person name="Williams S.M."/>
            <person name="Woodage T."/>
            <person name="Worley K.C."/>
            <person name="Wu D."/>
            <person name="Yang S."/>
            <person name="Yao Q.A."/>
            <person name="Ye J."/>
            <person name="Yeh R.-F."/>
            <person name="Zaveri J.S."/>
            <person name="Zhan M."/>
            <person name="Zhang G."/>
            <person name="Zhao Q."/>
            <person name="Zheng L."/>
            <person name="Zheng X.H."/>
            <person name="Zhong F.N."/>
            <person name="Zhong W."/>
            <person name="Zhou X."/>
            <person name="Zhu S.C."/>
            <person name="Zhu X."/>
            <person name="Smith H.O."/>
            <person name="Gibbs R.A."/>
            <person name="Myers E.W."/>
            <person name="Rubin G.M."/>
            <person name="Venter J.C."/>
        </authorList>
    </citation>
    <scope>NUCLEOTIDE SEQUENCE [LARGE SCALE GENOMIC DNA]</scope>
    <source>
        <strain>Berkeley</strain>
    </source>
</reference>
<reference key="2">
    <citation type="journal article" date="2002" name="Genome Biol.">
        <title>Annotation of the Drosophila melanogaster euchromatic genome: a systematic review.</title>
        <authorList>
            <person name="Misra S."/>
            <person name="Crosby M.A."/>
            <person name="Mungall C.J."/>
            <person name="Matthews B.B."/>
            <person name="Campbell K.S."/>
            <person name="Hradecky P."/>
            <person name="Huang Y."/>
            <person name="Kaminker J.S."/>
            <person name="Millburn G.H."/>
            <person name="Prochnik S.E."/>
            <person name="Smith C.D."/>
            <person name="Tupy J.L."/>
            <person name="Whitfield E.J."/>
            <person name="Bayraktaroglu L."/>
            <person name="Berman B.P."/>
            <person name="Bettencourt B.R."/>
            <person name="Celniker S.E."/>
            <person name="de Grey A.D.N.J."/>
            <person name="Drysdale R.A."/>
            <person name="Harris N.L."/>
            <person name="Richter J."/>
            <person name="Russo S."/>
            <person name="Schroeder A.J."/>
            <person name="Shu S.Q."/>
            <person name="Stapleton M."/>
            <person name="Yamada C."/>
            <person name="Ashburner M."/>
            <person name="Gelbart W.M."/>
            <person name="Rubin G.M."/>
            <person name="Lewis S.E."/>
        </authorList>
    </citation>
    <scope>GENOME REANNOTATION</scope>
    <source>
        <strain>Berkeley</strain>
    </source>
</reference>
<reference key="3">
    <citation type="journal article" date="1999" name="Neuron">
        <title>A novel family of divergent seven-transmembrane proteins: candidate odorant receptors in Drosophila.</title>
        <authorList>
            <person name="Clyne P.J."/>
            <person name="Warr C.G."/>
            <person name="Freeman M.R."/>
            <person name="Lessing D."/>
            <person name="Kim J."/>
            <person name="Carlson J.R."/>
        </authorList>
    </citation>
    <scope>IDENTIFICATION</scope>
    <scope>TISSUE SPECIFICITY</scope>
</reference>
<reference key="4">
    <citation type="journal article" date="2011" name="J. Neurosci.">
        <title>Similar odorants elicit different behavioral and physiological responses, some supersustained.</title>
        <authorList>
            <person name="Montague S.A."/>
            <person name="Mathew D."/>
            <person name="Carlson J.R."/>
        </authorList>
    </citation>
    <scope>FUNCTION</scope>
</reference>
<reference key="5">
    <citation type="journal article" date="2011" name="PLoS ONE">
        <title>Modeling peripheral olfactory coding in Drosophila larvae.</title>
        <authorList>
            <person name="Hoare D.J."/>
            <person name="Humble J."/>
            <person name="Jin D."/>
            <person name="Gilding N."/>
            <person name="Petersen R."/>
            <person name="Cobb M."/>
            <person name="McCrohan C."/>
        </authorList>
    </citation>
    <scope>FUNCTION</scope>
</reference>
<organism>
    <name type="scientific">Drosophila melanogaster</name>
    <name type="common">Fruit fly</name>
    <dbReference type="NCBI Taxonomy" id="7227"/>
    <lineage>
        <taxon>Eukaryota</taxon>
        <taxon>Metazoa</taxon>
        <taxon>Ecdysozoa</taxon>
        <taxon>Arthropoda</taxon>
        <taxon>Hexapoda</taxon>
        <taxon>Insecta</taxon>
        <taxon>Pterygota</taxon>
        <taxon>Neoptera</taxon>
        <taxon>Endopterygota</taxon>
        <taxon>Diptera</taxon>
        <taxon>Brachycera</taxon>
        <taxon>Muscomorpha</taxon>
        <taxon>Ephydroidea</taxon>
        <taxon>Drosophilidae</taxon>
        <taxon>Drosophila</taxon>
        <taxon>Sophophora</taxon>
    </lineage>
</organism>
<feature type="chain" id="PRO_0000174236" description="Odorant receptor 24a">
    <location>
        <begin position="1"/>
        <end position="398"/>
    </location>
</feature>
<feature type="topological domain" description="Cytoplasmic" evidence="2">
    <location>
        <begin position="1"/>
        <end position="14"/>
    </location>
</feature>
<feature type="transmembrane region" description="Helical; Name=1" evidence="2">
    <location>
        <begin position="15"/>
        <end position="31"/>
    </location>
</feature>
<feature type="topological domain" description="Extracellular" evidence="2">
    <location>
        <begin position="32"/>
        <end position="46"/>
    </location>
</feature>
<feature type="transmembrane region" description="Helical; Name=2" evidence="2">
    <location>
        <begin position="47"/>
        <end position="67"/>
    </location>
</feature>
<feature type="topological domain" description="Cytoplasmic" evidence="2">
    <location>
        <begin position="68"/>
        <end position="74"/>
    </location>
</feature>
<feature type="transmembrane region" description="Helical; Name=3" evidence="2">
    <location>
        <begin position="75"/>
        <end position="95"/>
    </location>
</feature>
<feature type="topological domain" description="Extracellular" evidence="2">
    <location>
        <begin position="96"/>
        <end position="124"/>
    </location>
</feature>
<feature type="transmembrane region" description="Helical; Name=4" evidence="2">
    <location>
        <begin position="125"/>
        <end position="145"/>
    </location>
</feature>
<feature type="topological domain" description="Cytoplasmic" evidence="2">
    <location>
        <begin position="146"/>
        <end position="199"/>
    </location>
</feature>
<feature type="transmembrane region" description="Helical; Name=5" evidence="2">
    <location>
        <begin position="200"/>
        <end position="220"/>
    </location>
</feature>
<feature type="topological domain" description="Extracellular" evidence="2">
    <location>
        <begin position="221"/>
        <end position="269"/>
    </location>
</feature>
<feature type="transmembrane region" description="Helical; Name=6" evidence="2">
    <location>
        <begin position="270"/>
        <end position="290"/>
    </location>
</feature>
<feature type="topological domain" description="Cytoplasmic" evidence="2">
    <location>
        <begin position="291"/>
        <end position="295"/>
    </location>
</feature>
<feature type="transmembrane region" description="Helical; Name=7" evidence="2">
    <location>
        <begin position="296"/>
        <end position="316"/>
    </location>
</feature>
<feature type="topological domain" description="Extracellular" evidence="2">
    <location>
        <begin position="317"/>
        <end position="398"/>
    </location>
</feature>
<name>OR24A_DROME</name>
<keyword id="KW-1003">Cell membrane</keyword>
<keyword id="KW-0472">Membrane</keyword>
<keyword id="KW-0552">Olfaction</keyword>
<keyword id="KW-0675">Receptor</keyword>
<keyword id="KW-1185">Reference proteome</keyword>
<keyword id="KW-0716">Sensory transduction</keyword>
<keyword id="KW-0807">Transducer</keyword>
<keyword id="KW-0812">Transmembrane</keyword>
<keyword id="KW-1133">Transmembrane helix</keyword>
<protein>
    <recommendedName>
        <fullName>Odorant receptor 24a</fullName>
    </recommendedName>
</protein>
<gene>
    <name type="primary">Or24a</name>
    <name type="synonym">DOR24D.1</name>
    <name type="synonym">Or24D.1</name>
    <name type="ORF">CG11767</name>
</gene>
<sequence length="398" mass="45679">MLPRFLTASYPMERHYFMVPKFALSLIGFYPEQKRTVLVKLWSFFNFFILTYGCYAEAYYGIHYIPINIATALDALCPVASSILSLVKMVAIWWYQDELRSLIERVRFLTEQQKSKRKLGYKKRFYTLATQLTFLLLCCGFCTSTSYSVRHLIDNILRRTHGKDWIYETPFKMMFPDLLLRLPLYPITYILVHWHGYITVVCFVGADGFFLGFCLYFTVLLLCLQDDVCDLLEVENIEKSPSEAEEARIVREMEKLVDRHNEVAELTERLSGVMVEITLAHFVTSSLIIGTSVVDILLFSGLGIIVYVVYTCAVGVEIFLYCLGGSHIMEACSNLARSTFSSHWYGHSVRVQKMTLLMVARAQRVLTIKIPFFSPSLETLTSILRFTGSLIALAKSVI</sequence>
<accession>P81913</accession>
<accession>Q9VQX1</accession>